<dbReference type="EC" id="1.3.5.2" evidence="1"/>
<dbReference type="EMBL" id="CP001010">
    <property type="protein sequence ID" value="ACB44254.1"/>
    <property type="molecule type" value="Genomic_DNA"/>
</dbReference>
<dbReference type="SMR" id="B1XV77"/>
<dbReference type="STRING" id="452638.Pnec_1080"/>
<dbReference type="KEGG" id="pne:Pnec_1080"/>
<dbReference type="eggNOG" id="COG0167">
    <property type="taxonomic scope" value="Bacteria"/>
</dbReference>
<dbReference type="HOGENOM" id="CLU_013640_2_0_4"/>
<dbReference type="OrthoDB" id="9802377at2"/>
<dbReference type="UniPathway" id="UPA00070">
    <property type="reaction ID" value="UER00946"/>
</dbReference>
<dbReference type="GO" id="GO:0005737">
    <property type="term" value="C:cytoplasm"/>
    <property type="evidence" value="ECO:0007669"/>
    <property type="project" value="InterPro"/>
</dbReference>
<dbReference type="GO" id="GO:0005886">
    <property type="term" value="C:plasma membrane"/>
    <property type="evidence" value="ECO:0007669"/>
    <property type="project" value="UniProtKB-SubCell"/>
</dbReference>
<dbReference type="GO" id="GO:0106430">
    <property type="term" value="F:dihydroorotate dehydrogenase (quinone) activity"/>
    <property type="evidence" value="ECO:0007669"/>
    <property type="project" value="UniProtKB-EC"/>
</dbReference>
<dbReference type="GO" id="GO:0006207">
    <property type="term" value="P:'de novo' pyrimidine nucleobase biosynthetic process"/>
    <property type="evidence" value="ECO:0007669"/>
    <property type="project" value="InterPro"/>
</dbReference>
<dbReference type="GO" id="GO:0044205">
    <property type="term" value="P:'de novo' UMP biosynthetic process"/>
    <property type="evidence" value="ECO:0007669"/>
    <property type="project" value="UniProtKB-UniRule"/>
</dbReference>
<dbReference type="CDD" id="cd04738">
    <property type="entry name" value="DHOD_2_like"/>
    <property type="match status" value="1"/>
</dbReference>
<dbReference type="Gene3D" id="3.20.20.70">
    <property type="entry name" value="Aldolase class I"/>
    <property type="match status" value="1"/>
</dbReference>
<dbReference type="HAMAP" id="MF_00225">
    <property type="entry name" value="DHO_dh_type2"/>
    <property type="match status" value="1"/>
</dbReference>
<dbReference type="InterPro" id="IPR013785">
    <property type="entry name" value="Aldolase_TIM"/>
</dbReference>
<dbReference type="InterPro" id="IPR050074">
    <property type="entry name" value="DHO_dehydrogenase"/>
</dbReference>
<dbReference type="InterPro" id="IPR012135">
    <property type="entry name" value="Dihydroorotate_DH_1_2"/>
</dbReference>
<dbReference type="InterPro" id="IPR005719">
    <property type="entry name" value="Dihydroorotate_DH_2"/>
</dbReference>
<dbReference type="InterPro" id="IPR005720">
    <property type="entry name" value="Dihydroorotate_DH_cat"/>
</dbReference>
<dbReference type="InterPro" id="IPR001295">
    <property type="entry name" value="Dihydroorotate_DH_CS"/>
</dbReference>
<dbReference type="NCBIfam" id="NF003644">
    <property type="entry name" value="PRK05286.1-1"/>
    <property type="match status" value="1"/>
</dbReference>
<dbReference type="NCBIfam" id="NF003645">
    <property type="entry name" value="PRK05286.1-2"/>
    <property type="match status" value="1"/>
</dbReference>
<dbReference type="NCBIfam" id="NF003646">
    <property type="entry name" value="PRK05286.1-4"/>
    <property type="match status" value="1"/>
</dbReference>
<dbReference type="NCBIfam" id="NF003652">
    <property type="entry name" value="PRK05286.2-5"/>
    <property type="match status" value="1"/>
</dbReference>
<dbReference type="NCBIfam" id="TIGR01036">
    <property type="entry name" value="pyrD_sub2"/>
    <property type="match status" value="1"/>
</dbReference>
<dbReference type="PANTHER" id="PTHR48109:SF4">
    <property type="entry name" value="DIHYDROOROTATE DEHYDROGENASE (QUINONE), MITOCHONDRIAL"/>
    <property type="match status" value="1"/>
</dbReference>
<dbReference type="PANTHER" id="PTHR48109">
    <property type="entry name" value="DIHYDROOROTATE DEHYDROGENASE (QUINONE), MITOCHONDRIAL-RELATED"/>
    <property type="match status" value="1"/>
</dbReference>
<dbReference type="Pfam" id="PF01180">
    <property type="entry name" value="DHO_dh"/>
    <property type="match status" value="1"/>
</dbReference>
<dbReference type="PIRSF" id="PIRSF000164">
    <property type="entry name" value="DHO_oxidase"/>
    <property type="match status" value="1"/>
</dbReference>
<dbReference type="SUPFAM" id="SSF51395">
    <property type="entry name" value="FMN-linked oxidoreductases"/>
    <property type="match status" value="1"/>
</dbReference>
<dbReference type="PROSITE" id="PS00911">
    <property type="entry name" value="DHODEHASE_1"/>
    <property type="match status" value="1"/>
</dbReference>
<dbReference type="PROSITE" id="PS00912">
    <property type="entry name" value="DHODEHASE_2"/>
    <property type="match status" value="1"/>
</dbReference>
<comment type="function">
    <text evidence="1">Catalyzes the conversion of dihydroorotate to orotate with quinone as electron acceptor.</text>
</comment>
<comment type="catalytic activity">
    <reaction evidence="1">
        <text>(S)-dihydroorotate + a quinone = orotate + a quinol</text>
        <dbReference type="Rhea" id="RHEA:30187"/>
        <dbReference type="ChEBI" id="CHEBI:24646"/>
        <dbReference type="ChEBI" id="CHEBI:30839"/>
        <dbReference type="ChEBI" id="CHEBI:30864"/>
        <dbReference type="ChEBI" id="CHEBI:132124"/>
        <dbReference type="EC" id="1.3.5.2"/>
    </reaction>
</comment>
<comment type="cofactor">
    <cofactor evidence="1">
        <name>FMN</name>
        <dbReference type="ChEBI" id="CHEBI:58210"/>
    </cofactor>
    <text evidence="1">Binds 1 FMN per subunit.</text>
</comment>
<comment type="pathway">
    <text evidence="1">Pyrimidine metabolism; UMP biosynthesis via de novo pathway; orotate from (S)-dihydroorotate (quinone route): step 1/1.</text>
</comment>
<comment type="subunit">
    <text evidence="1">Monomer.</text>
</comment>
<comment type="subcellular location">
    <subcellularLocation>
        <location evidence="1">Cell membrane</location>
        <topology evidence="1">Peripheral membrane protein</topology>
    </subcellularLocation>
</comment>
<comment type="similarity">
    <text evidence="1">Belongs to the dihydroorotate dehydrogenase family. Type 2 subfamily.</text>
</comment>
<reference key="1">
    <citation type="journal article" date="2013" name="Proc. Natl. Acad. Sci. U.S.A.">
        <title>Polynucleobacter necessarius, a model for genome reduction in both free-living and symbiotic bacteria.</title>
        <authorList>
            <person name="Boscaro V."/>
            <person name="Felletti M."/>
            <person name="Vannini C."/>
            <person name="Ackerman M.S."/>
            <person name="Chain P.S."/>
            <person name="Malfatti S."/>
            <person name="Vergez L.M."/>
            <person name="Shin M."/>
            <person name="Doak T.G."/>
            <person name="Lynch M."/>
            <person name="Petroni G."/>
        </authorList>
    </citation>
    <scope>NUCLEOTIDE SEQUENCE [LARGE SCALE GENOMIC DNA]</scope>
    <source>
        <strain>STIR1</strain>
    </source>
</reference>
<gene>
    <name evidence="1" type="primary">pyrD</name>
    <name type="ordered locus">Pnec_1080</name>
</gene>
<proteinExistence type="inferred from homology"/>
<accession>B1XV77</accession>
<protein>
    <recommendedName>
        <fullName evidence="1">Dihydroorotate dehydrogenase (quinone)</fullName>
        <ecNumber evidence="1">1.3.5.2</ecNumber>
    </recommendedName>
    <alternativeName>
        <fullName evidence="1">DHOdehase</fullName>
        <shortName evidence="1">DHOD</shortName>
        <shortName evidence="1">DHODase</shortName>
    </alternativeName>
    <alternativeName>
        <fullName evidence="1">Dihydroorotate oxidase</fullName>
    </alternativeName>
</protein>
<keyword id="KW-1003">Cell membrane</keyword>
<keyword id="KW-0285">Flavoprotein</keyword>
<keyword id="KW-0288">FMN</keyword>
<keyword id="KW-0472">Membrane</keyword>
<keyword id="KW-0560">Oxidoreductase</keyword>
<keyword id="KW-0665">Pyrimidine biosynthesis</keyword>
<organism>
    <name type="scientific">Polynucleobacter necessarius subsp. necessarius (strain STIR1)</name>
    <dbReference type="NCBI Taxonomy" id="452638"/>
    <lineage>
        <taxon>Bacteria</taxon>
        <taxon>Pseudomonadati</taxon>
        <taxon>Pseudomonadota</taxon>
        <taxon>Betaproteobacteria</taxon>
        <taxon>Burkholderiales</taxon>
        <taxon>Burkholderiaceae</taxon>
        <taxon>Polynucleobacter</taxon>
    </lineage>
</organism>
<evidence type="ECO:0000255" key="1">
    <source>
        <dbReference type="HAMAP-Rule" id="MF_00225"/>
    </source>
</evidence>
<feature type="chain" id="PRO_1000100274" description="Dihydroorotate dehydrogenase (quinone)">
    <location>
        <begin position="1"/>
        <end position="344"/>
    </location>
</feature>
<feature type="active site" description="Nucleophile" evidence="1">
    <location>
        <position position="180"/>
    </location>
</feature>
<feature type="binding site" evidence="1">
    <location>
        <begin position="64"/>
        <end position="68"/>
    </location>
    <ligand>
        <name>FMN</name>
        <dbReference type="ChEBI" id="CHEBI:58210"/>
    </ligand>
</feature>
<feature type="binding site" evidence="1">
    <location>
        <position position="68"/>
    </location>
    <ligand>
        <name>substrate</name>
    </ligand>
</feature>
<feature type="binding site" evidence="1">
    <location>
        <position position="88"/>
    </location>
    <ligand>
        <name>FMN</name>
        <dbReference type="ChEBI" id="CHEBI:58210"/>
    </ligand>
</feature>
<feature type="binding site" evidence="1">
    <location>
        <begin position="113"/>
        <end position="117"/>
    </location>
    <ligand>
        <name>substrate</name>
    </ligand>
</feature>
<feature type="binding site" evidence="1">
    <location>
        <position position="144"/>
    </location>
    <ligand>
        <name>FMN</name>
        <dbReference type="ChEBI" id="CHEBI:58210"/>
    </ligand>
</feature>
<feature type="binding site" evidence="1">
    <location>
        <position position="177"/>
    </location>
    <ligand>
        <name>FMN</name>
        <dbReference type="ChEBI" id="CHEBI:58210"/>
    </ligand>
</feature>
<feature type="binding site" evidence="1">
    <location>
        <position position="177"/>
    </location>
    <ligand>
        <name>substrate</name>
    </ligand>
</feature>
<feature type="binding site" evidence="1">
    <location>
        <position position="182"/>
    </location>
    <ligand>
        <name>substrate</name>
    </ligand>
</feature>
<feature type="binding site" evidence="1">
    <location>
        <position position="222"/>
    </location>
    <ligand>
        <name>FMN</name>
        <dbReference type="ChEBI" id="CHEBI:58210"/>
    </ligand>
</feature>
<feature type="binding site" evidence="1">
    <location>
        <position position="250"/>
    </location>
    <ligand>
        <name>FMN</name>
        <dbReference type="ChEBI" id="CHEBI:58210"/>
    </ligand>
</feature>
<feature type="binding site" evidence="1">
    <location>
        <begin position="251"/>
        <end position="252"/>
    </location>
    <ligand>
        <name>substrate</name>
    </ligand>
</feature>
<feature type="binding site" evidence="1">
    <location>
        <position position="273"/>
    </location>
    <ligand>
        <name>FMN</name>
        <dbReference type="ChEBI" id="CHEBI:58210"/>
    </ligand>
</feature>
<feature type="binding site" evidence="1">
    <location>
        <position position="302"/>
    </location>
    <ligand>
        <name>FMN</name>
        <dbReference type="ChEBI" id="CHEBI:58210"/>
    </ligand>
</feature>
<feature type="binding site" evidence="1">
    <location>
        <begin position="323"/>
        <end position="324"/>
    </location>
    <ligand>
        <name>FMN</name>
        <dbReference type="ChEBI" id="CHEBI:58210"/>
    </ligand>
</feature>
<sequence>MIDRYSLLRPWLFCIDPEKAHNLTLSNLDRAQRWGFLERLITKPINDPQVLCGIEFSNPVGLAAGLDKDGKYIDALAALGFGFLEIGTVTPRPQPGNPKPRMFRLPEAQAIINRMGFNNDGVEACVARVRCSKFWQNGGVLGMNIGKNASTPIEEASRDYILAMEAVYEIATYITINISSPNTQNLRALQGEEMLRELLGSLGEARKHLCDRHGVRKPLFLKIAPNLDQGDINLIADLLLEFGIDAVIATNTTISRDAVKGMEFGEEAGGLSGAPVRNASNIVIKALKARLGNQLPIIGVGGIMSGVDAREKIMAGASLVQLYSGLIYRGPDLVYKCATVLRQP</sequence>
<name>PYRD_POLNS</name>